<evidence type="ECO:0000255" key="1">
    <source>
        <dbReference type="HAMAP-Rule" id="MF_01569"/>
    </source>
</evidence>
<evidence type="ECO:0000305" key="2"/>
<gene>
    <name evidence="1" type="primary">proS</name>
    <name type="ordered locus">PSHAa1623</name>
</gene>
<organism>
    <name type="scientific">Pseudoalteromonas translucida (strain TAC 125)</name>
    <dbReference type="NCBI Taxonomy" id="326442"/>
    <lineage>
        <taxon>Bacteria</taxon>
        <taxon>Pseudomonadati</taxon>
        <taxon>Pseudomonadota</taxon>
        <taxon>Gammaproteobacteria</taxon>
        <taxon>Alteromonadales</taxon>
        <taxon>Pseudoalteromonadaceae</taxon>
        <taxon>Pseudoalteromonas</taxon>
    </lineage>
</organism>
<feature type="chain" id="PRO_0000248743" description="Proline--tRNA ligase">
    <location>
        <begin position="1"/>
        <end position="574"/>
    </location>
</feature>
<keyword id="KW-0030">Aminoacyl-tRNA synthetase</keyword>
<keyword id="KW-0067">ATP-binding</keyword>
<keyword id="KW-0963">Cytoplasm</keyword>
<keyword id="KW-0436">Ligase</keyword>
<keyword id="KW-0547">Nucleotide-binding</keyword>
<keyword id="KW-0648">Protein biosynthesis</keyword>
<keyword id="KW-1185">Reference proteome</keyword>
<comment type="function">
    <text evidence="1">Catalyzes the attachment of proline to tRNA(Pro) in a two-step reaction: proline is first activated by ATP to form Pro-AMP and then transferred to the acceptor end of tRNA(Pro). As ProRS can inadvertently accommodate and process non-cognate amino acids such as alanine and cysteine, to avoid such errors it has two additional distinct editing activities against alanine. One activity is designated as 'pretransfer' editing and involves the tRNA(Pro)-independent hydrolysis of activated Ala-AMP. The other activity is designated 'posttransfer' editing and involves deacylation of mischarged Ala-tRNA(Pro). The misacylated Cys-tRNA(Pro) is not edited by ProRS.</text>
</comment>
<comment type="catalytic activity">
    <reaction evidence="1">
        <text>tRNA(Pro) + L-proline + ATP = L-prolyl-tRNA(Pro) + AMP + diphosphate</text>
        <dbReference type="Rhea" id="RHEA:14305"/>
        <dbReference type="Rhea" id="RHEA-COMP:9700"/>
        <dbReference type="Rhea" id="RHEA-COMP:9702"/>
        <dbReference type="ChEBI" id="CHEBI:30616"/>
        <dbReference type="ChEBI" id="CHEBI:33019"/>
        <dbReference type="ChEBI" id="CHEBI:60039"/>
        <dbReference type="ChEBI" id="CHEBI:78442"/>
        <dbReference type="ChEBI" id="CHEBI:78532"/>
        <dbReference type="ChEBI" id="CHEBI:456215"/>
        <dbReference type="EC" id="6.1.1.15"/>
    </reaction>
</comment>
<comment type="subunit">
    <text evidence="1">Homodimer.</text>
</comment>
<comment type="subcellular location">
    <subcellularLocation>
        <location evidence="1">Cytoplasm</location>
    </subcellularLocation>
</comment>
<comment type="domain">
    <text evidence="1">Consists of three domains: the N-terminal catalytic domain, the editing domain and the C-terminal anticodon-binding domain.</text>
</comment>
<comment type="similarity">
    <text evidence="1">Belongs to the class-II aminoacyl-tRNA synthetase family. ProS type 1 subfamily.</text>
</comment>
<comment type="sequence caution" evidence="2">
    <conflict type="erroneous initiation">
        <sequence resource="EMBL-CDS" id="CAI86696"/>
    </conflict>
</comment>
<dbReference type="EC" id="6.1.1.15" evidence="1"/>
<dbReference type="EMBL" id="CR954246">
    <property type="protein sequence ID" value="CAI86696.1"/>
    <property type="status" value="ALT_INIT"/>
    <property type="molecule type" value="Genomic_DNA"/>
</dbReference>
<dbReference type="SMR" id="Q3IGT7"/>
<dbReference type="STRING" id="326442.PSHAa1623"/>
<dbReference type="KEGG" id="pha:PSHAa1623"/>
<dbReference type="PATRIC" id="fig|326442.8.peg.1570"/>
<dbReference type="eggNOG" id="COG0442">
    <property type="taxonomic scope" value="Bacteria"/>
</dbReference>
<dbReference type="HOGENOM" id="CLU_016739_0_0_6"/>
<dbReference type="BioCyc" id="PHAL326442:PSHA_RS07960-MONOMER"/>
<dbReference type="Proteomes" id="UP000006843">
    <property type="component" value="Chromosome I"/>
</dbReference>
<dbReference type="GO" id="GO:0005829">
    <property type="term" value="C:cytosol"/>
    <property type="evidence" value="ECO:0007669"/>
    <property type="project" value="TreeGrafter"/>
</dbReference>
<dbReference type="GO" id="GO:0002161">
    <property type="term" value="F:aminoacyl-tRNA deacylase activity"/>
    <property type="evidence" value="ECO:0007669"/>
    <property type="project" value="InterPro"/>
</dbReference>
<dbReference type="GO" id="GO:0005524">
    <property type="term" value="F:ATP binding"/>
    <property type="evidence" value="ECO:0007669"/>
    <property type="project" value="UniProtKB-UniRule"/>
</dbReference>
<dbReference type="GO" id="GO:0004827">
    <property type="term" value="F:proline-tRNA ligase activity"/>
    <property type="evidence" value="ECO:0007669"/>
    <property type="project" value="UniProtKB-UniRule"/>
</dbReference>
<dbReference type="GO" id="GO:0006433">
    <property type="term" value="P:prolyl-tRNA aminoacylation"/>
    <property type="evidence" value="ECO:0007669"/>
    <property type="project" value="UniProtKB-UniRule"/>
</dbReference>
<dbReference type="CDD" id="cd04334">
    <property type="entry name" value="ProRS-INS"/>
    <property type="match status" value="1"/>
</dbReference>
<dbReference type="CDD" id="cd00861">
    <property type="entry name" value="ProRS_anticodon_short"/>
    <property type="match status" value="1"/>
</dbReference>
<dbReference type="CDD" id="cd00779">
    <property type="entry name" value="ProRS_core_prok"/>
    <property type="match status" value="1"/>
</dbReference>
<dbReference type="FunFam" id="3.30.930.10:FF:000043">
    <property type="entry name" value="Proline--tRNA ligase"/>
    <property type="match status" value="1"/>
</dbReference>
<dbReference type="FunFam" id="3.30.930.10:FF:000097">
    <property type="entry name" value="Proline--tRNA ligase"/>
    <property type="match status" value="1"/>
</dbReference>
<dbReference type="Gene3D" id="3.40.50.800">
    <property type="entry name" value="Anticodon-binding domain"/>
    <property type="match status" value="1"/>
</dbReference>
<dbReference type="Gene3D" id="3.30.930.10">
    <property type="entry name" value="Bira Bifunctional Protein, Domain 2"/>
    <property type="match status" value="2"/>
</dbReference>
<dbReference type="HAMAP" id="MF_01569">
    <property type="entry name" value="Pro_tRNA_synth_type1"/>
    <property type="match status" value="1"/>
</dbReference>
<dbReference type="InterPro" id="IPR002314">
    <property type="entry name" value="aa-tRNA-synt_IIb"/>
</dbReference>
<dbReference type="InterPro" id="IPR006195">
    <property type="entry name" value="aa-tRNA-synth_II"/>
</dbReference>
<dbReference type="InterPro" id="IPR045864">
    <property type="entry name" value="aa-tRNA-synth_II/BPL/LPL"/>
</dbReference>
<dbReference type="InterPro" id="IPR004154">
    <property type="entry name" value="Anticodon-bd"/>
</dbReference>
<dbReference type="InterPro" id="IPR036621">
    <property type="entry name" value="Anticodon-bd_dom_sf"/>
</dbReference>
<dbReference type="InterPro" id="IPR002316">
    <property type="entry name" value="Pro-tRNA-ligase_IIa"/>
</dbReference>
<dbReference type="InterPro" id="IPR004500">
    <property type="entry name" value="Pro-tRNA-synth_IIa_bac-type"/>
</dbReference>
<dbReference type="InterPro" id="IPR023717">
    <property type="entry name" value="Pro-tRNA-Synthase_IIa_type1"/>
</dbReference>
<dbReference type="InterPro" id="IPR050062">
    <property type="entry name" value="Pro-tRNA_synthetase"/>
</dbReference>
<dbReference type="InterPro" id="IPR044140">
    <property type="entry name" value="ProRS_anticodon_short"/>
</dbReference>
<dbReference type="InterPro" id="IPR033730">
    <property type="entry name" value="ProRS_core_prok"/>
</dbReference>
<dbReference type="InterPro" id="IPR036754">
    <property type="entry name" value="YbaK/aa-tRNA-synt-asso_dom_sf"/>
</dbReference>
<dbReference type="InterPro" id="IPR007214">
    <property type="entry name" value="YbaK/aa-tRNA-synth-assoc-dom"/>
</dbReference>
<dbReference type="NCBIfam" id="NF006625">
    <property type="entry name" value="PRK09194.1"/>
    <property type="match status" value="1"/>
</dbReference>
<dbReference type="NCBIfam" id="TIGR00409">
    <property type="entry name" value="proS_fam_II"/>
    <property type="match status" value="1"/>
</dbReference>
<dbReference type="PANTHER" id="PTHR42753">
    <property type="entry name" value="MITOCHONDRIAL RIBOSOME PROTEIN L39/PROLYL-TRNA LIGASE FAMILY MEMBER"/>
    <property type="match status" value="1"/>
</dbReference>
<dbReference type="PANTHER" id="PTHR42753:SF2">
    <property type="entry name" value="PROLINE--TRNA LIGASE"/>
    <property type="match status" value="1"/>
</dbReference>
<dbReference type="Pfam" id="PF03129">
    <property type="entry name" value="HGTP_anticodon"/>
    <property type="match status" value="1"/>
</dbReference>
<dbReference type="Pfam" id="PF00587">
    <property type="entry name" value="tRNA-synt_2b"/>
    <property type="match status" value="1"/>
</dbReference>
<dbReference type="Pfam" id="PF04073">
    <property type="entry name" value="tRNA_edit"/>
    <property type="match status" value="1"/>
</dbReference>
<dbReference type="PIRSF" id="PIRSF001535">
    <property type="entry name" value="ProRS_1"/>
    <property type="match status" value="1"/>
</dbReference>
<dbReference type="PRINTS" id="PR01046">
    <property type="entry name" value="TRNASYNTHPRO"/>
</dbReference>
<dbReference type="SUPFAM" id="SSF52954">
    <property type="entry name" value="Class II aaRS ABD-related"/>
    <property type="match status" value="1"/>
</dbReference>
<dbReference type="SUPFAM" id="SSF55681">
    <property type="entry name" value="Class II aaRS and biotin synthetases"/>
    <property type="match status" value="1"/>
</dbReference>
<dbReference type="SUPFAM" id="SSF55826">
    <property type="entry name" value="YbaK/ProRS associated domain"/>
    <property type="match status" value="1"/>
</dbReference>
<dbReference type="PROSITE" id="PS50862">
    <property type="entry name" value="AA_TRNA_LIGASE_II"/>
    <property type="match status" value="1"/>
</dbReference>
<sequence length="574" mass="63827">MRTSQYILATLKETPSDAEIVSHQLMLRAGMIRRVASGLYTWLPTGLRVLRKVENIVREEMNKANAIEMLMPVIQPADLWEESGRWDEFGPELMRFTDRHNRTFALGPTHEEVITDFVRKEISSYKQLPISLYQIQTKVRDERRPRFGVMRAREFTMKDAYSFHLSDECLDATYQVMHKAYCNIFERLNLDYRPVIADTGSIGGSVSHEFHVLAESGEDAIAFSDGSDYAANIEKAEALAPSEPRPAATKELKAFPTPDAKTINELKKHYGVKPHRGVKTLIVYAAPDENGVRGLVALVLRGDHDLNELKAEKHPLVDSPLEMATEADIVAAIGAKPGSLGPVGLSMPIIVDRSANILADFVAGANKDDEHYSGINWDRDVTDYEVADIRNIVEGDASPCGQGTLQIKRGIEVGHIFQLGTKYSQAMKAGVLNESGKNQIMTMGCYGIGVSRIVAAAIEQNNDQYGIIWPQPIAPFDLAIVPMNMHKSHRIPDIATNLYQGLKDAGLDVLFDDRKERPGVMFNDMELIGVPFTLVIGERNLDENKVELKNRRTGEKLMIDIDTAIDAIKAAVKG</sequence>
<name>SYP_PSET1</name>
<reference key="1">
    <citation type="journal article" date="2005" name="Genome Res.">
        <title>Coping with cold: the genome of the versatile marine Antarctica bacterium Pseudoalteromonas haloplanktis TAC125.</title>
        <authorList>
            <person name="Medigue C."/>
            <person name="Krin E."/>
            <person name="Pascal G."/>
            <person name="Barbe V."/>
            <person name="Bernsel A."/>
            <person name="Bertin P.N."/>
            <person name="Cheung F."/>
            <person name="Cruveiller S."/>
            <person name="D'Amico S."/>
            <person name="Duilio A."/>
            <person name="Fang G."/>
            <person name="Feller G."/>
            <person name="Ho C."/>
            <person name="Mangenot S."/>
            <person name="Marino G."/>
            <person name="Nilsson J."/>
            <person name="Parrilli E."/>
            <person name="Rocha E.P.C."/>
            <person name="Rouy Z."/>
            <person name="Sekowska A."/>
            <person name="Tutino M.L."/>
            <person name="Vallenet D."/>
            <person name="von Heijne G."/>
            <person name="Danchin A."/>
        </authorList>
    </citation>
    <scope>NUCLEOTIDE SEQUENCE [LARGE SCALE GENOMIC DNA]</scope>
    <source>
        <strain>TAC 125</strain>
    </source>
</reference>
<proteinExistence type="inferred from homology"/>
<protein>
    <recommendedName>
        <fullName evidence="1">Proline--tRNA ligase</fullName>
        <ecNumber evidence="1">6.1.1.15</ecNumber>
    </recommendedName>
    <alternativeName>
        <fullName evidence="1">Prolyl-tRNA synthetase</fullName>
        <shortName evidence="1">ProRS</shortName>
    </alternativeName>
</protein>
<accession>Q3IGT7</accession>